<organism>
    <name type="scientific">Cyanidioschyzon merolae (strain NIES-3377 / 10D)</name>
    <name type="common">Unicellular red alga</name>
    <dbReference type="NCBI Taxonomy" id="280699"/>
    <lineage>
        <taxon>Eukaryota</taxon>
        <taxon>Rhodophyta</taxon>
        <taxon>Bangiophyceae</taxon>
        <taxon>Cyanidiales</taxon>
        <taxon>Cyanidiaceae</taxon>
        <taxon>Cyanidioschyzon</taxon>
    </lineage>
</organism>
<sequence>MRDLIAVQRNSYYTFLTKSLKEEFDKISPIVDYTGQLELHLITSKMELKPPKITPVQAKRQDITYSVGMYMPVQLWNHQTGDVRQQMIYFGEIPLMTEDATFIINGAERVVVNQIVRSPGVYFQALWDKQHVRTFEATFMANRGAWIKYELDKQKLLWVRLDKNRKMPLVIFLQALGLNLQEIKPHLTNREVFERSWENHAVNNTEAALVEFYKKMRPGEPATVHSAKQLLYARFFDPKKYDLSEVGRYKLNQKLHLDIPLSVHILTTSDLLAGLDYLIQLCLDRARVDDIDHLANRRLKCVGELLQNQVRIGLSRLEKLLREKMTIGEKLQPSSLLNPKPLTSAIREFFASSQLSQFMDQINPLAELTHKRRISALGAGGLTRERAGFAVRDIHPSHYGRICPIETPEGPNAGLIGSLAIFARVNRYGFIETPYYPVKKGQVQKSIVYLTADVEDNYRLAPADVKYDREGQICSPIVAVRYRQEWTTCDASHVDYMAISPIQFISAATCLIPFLEHDDANRALMGSNMQRQAVPLIRASKPYVSTGQEKWMVQGVFSKADGIVRSVQATSIRIQHARGPVDYALLKYQKSNQDTCIDYRPLVWVGEHVVKGQLIAQSAAMDSGELALGQNVLIAYMPWEGYNFEDAFVISERLVYEDVYTSIHIEKYETDARQTKLGAEQITRQIPNVGEHALRQLDEHGIISVGSWVEAGSILVGKITPKGESDQPPEGKLLRAIFGEKNQHVKDSSLRMPNGSRGRVIHVRILSRDQGDELPAGVNISVRVSVAVKRVIQVGDKMAGRHGNKGIVARILPRCDMPYLPDGTPVDVILNPLGVPSRMNVGQLFEALLGLAAHRLRKRIKIVPFDEMYHKEASRIFVHQQLKRAALSAQTILYDGRSGEKFDNAVTVGMAYMLKLVHLVDEKIHARSTGPYSLVTQQPLGGRAQHGGQRLGEMEVWALEAYGAAYTLQELLTLKSDDMEGRTATLNAIVKAQPIPRGGTPESFKVLMRELQALGLDVTVLQLESQALCVMQSKLD</sequence>
<keyword id="KW-0150">Chloroplast</keyword>
<keyword id="KW-0240">DNA-directed RNA polymerase</keyword>
<keyword id="KW-0548">Nucleotidyltransferase</keyword>
<keyword id="KW-0934">Plastid</keyword>
<keyword id="KW-1185">Reference proteome</keyword>
<keyword id="KW-0804">Transcription</keyword>
<keyword id="KW-0808">Transferase</keyword>
<geneLocation type="chloroplast"/>
<dbReference type="EC" id="2.7.7.6" evidence="1"/>
<dbReference type="EMBL" id="AB002583">
    <property type="protein sequence ID" value="BAC76278.1"/>
    <property type="molecule type" value="Genomic_DNA"/>
</dbReference>
<dbReference type="RefSeq" id="NP_849116.1">
    <property type="nucleotide sequence ID" value="NC_004799.1"/>
</dbReference>
<dbReference type="SMR" id="Q85FR7"/>
<dbReference type="STRING" id="280699.Q85FR7"/>
<dbReference type="EnsemblPlants" id="CMV216CT">
    <property type="protein sequence ID" value="CMV216CT"/>
    <property type="gene ID" value="CMV216C"/>
</dbReference>
<dbReference type="GeneID" id="844995"/>
<dbReference type="Gramene" id="CMV216CT">
    <property type="protein sequence ID" value="CMV216CT"/>
    <property type="gene ID" value="CMV216C"/>
</dbReference>
<dbReference type="KEGG" id="cme:CymeCp184"/>
<dbReference type="eggNOG" id="KOG0214">
    <property type="taxonomic scope" value="Eukaryota"/>
</dbReference>
<dbReference type="HOGENOM" id="CLU_000524_4_1_1"/>
<dbReference type="Proteomes" id="UP000007014">
    <property type="component" value="Chloroplast"/>
</dbReference>
<dbReference type="GO" id="GO:0009507">
    <property type="term" value="C:chloroplast"/>
    <property type="evidence" value="ECO:0007669"/>
    <property type="project" value="UniProtKB-SubCell"/>
</dbReference>
<dbReference type="GO" id="GO:0000428">
    <property type="term" value="C:DNA-directed RNA polymerase complex"/>
    <property type="evidence" value="ECO:0007669"/>
    <property type="project" value="UniProtKB-KW"/>
</dbReference>
<dbReference type="GO" id="GO:0005739">
    <property type="term" value="C:mitochondrion"/>
    <property type="evidence" value="ECO:0007669"/>
    <property type="project" value="GOC"/>
</dbReference>
<dbReference type="GO" id="GO:0003677">
    <property type="term" value="F:DNA binding"/>
    <property type="evidence" value="ECO:0007669"/>
    <property type="project" value="UniProtKB-UniRule"/>
</dbReference>
<dbReference type="GO" id="GO:0003899">
    <property type="term" value="F:DNA-directed RNA polymerase activity"/>
    <property type="evidence" value="ECO:0007669"/>
    <property type="project" value="UniProtKB-UniRule"/>
</dbReference>
<dbReference type="GO" id="GO:0003729">
    <property type="term" value="F:mRNA binding"/>
    <property type="evidence" value="ECO:0007669"/>
    <property type="project" value="EnsemblPlants"/>
</dbReference>
<dbReference type="GO" id="GO:0032549">
    <property type="term" value="F:ribonucleoside binding"/>
    <property type="evidence" value="ECO:0007669"/>
    <property type="project" value="InterPro"/>
</dbReference>
<dbReference type="GO" id="GO:0006351">
    <property type="term" value="P:DNA-templated transcription"/>
    <property type="evidence" value="ECO:0007669"/>
    <property type="project" value="UniProtKB-UniRule"/>
</dbReference>
<dbReference type="CDD" id="cd00653">
    <property type="entry name" value="RNA_pol_B_RPB2"/>
    <property type="match status" value="1"/>
</dbReference>
<dbReference type="Gene3D" id="2.40.50.100">
    <property type="match status" value="1"/>
</dbReference>
<dbReference type="Gene3D" id="2.40.50.150">
    <property type="match status" value="1"/>
</dbReference>
<dbReference type="Gene3D" id="3.90.1100.10">
    <property type="match status" value="1"/>
</dbReference>
<dbReference type="Gene3D" id="2.30.150.10">
    <property type="entry name" value="DNA-directed RNA polymerase, beta subunit, external 1 domain"/>
    <property type="match status" value="1"/>
</dbReference>
<dbReference type="Gene3D" id="2.40.270.10">
    <property type="entry name" value="DNA-directed RNA polymerase, subunit 2, domain 6"/>
    <property type="match status" value="1"/>
</dbReference>
<dbReference type="Gene3D" id="3.90.1800.10">
    <property type="entry name" value="RNA polymerase alpha subunit dimerisation domain"/>
    <property type="match status" value="1"/>
</dbReference>
<dbReference type="Gene3D" id="3.90.1110.10">
    <property type="entry name" value="RNA polymerase Rpb2, domain 2"/>
    <property type="match status" value="1"/>
</dbReference>
<dbReference type="HAMAP" id="MF_01321">
    <property type="entry name" value="RNApol_bact_RpoB"/>
    <property type="match status" value="1"/>
</dbReference>
<dbReference type="InterPro" id="IPR042107">
    <property type="entry name" value="DNA-dir_RNA_pol_bsu_ext_1_sf"/>
</dbReference>
<dbReference type="InterPro" id="IPR019462">
    <property type="entry name" value="DNA-dir_RNA_pol_bsu_external_1"/>
</dbReference>
<dbReference type="InterPro" id="IPR015712">
    <property type="entry name" value="DNA-dir_RNA_pol_su2"/>
</dbReference>
<dbReference type="InterPro" id="IPR007120">
    <property type="entry name" value="DNA-dir_RNAP_su2_dom"/>
</dbReference>
<dbReference type="InterPro" id="IPR037033">
    <property type="entry name" value="DNA-dir_RNAP_su2_hyb_sf"/>
</dbReference>
<dbReference type="InterPro" id="IPR010243">
    <property type="entry name" value="RNA_pol_bsu_bac"/>
</dbReference>
<dbReference type="InterPro" id="IPR007121">
    <property type="entry name" value="RNA_pol_bsu_CS"/>
</dbReference>
<dbReference type="InterPro" id="IPR007644">
    <property type="entry name" value="RNA_pol_bsu_protrusion"/>
</dbReference>
<dbReference type="InterPro" id="IPR007642">
    <property type="entry name" value="RNA_pol_Rpb2_2"/>
</dbReference>
<dbReference type="InterPro" id="IPR037034">
    <property type="entry name" value="RNA_pol_Rpb2_2_sf"/>
</dbReference>
<dbReference type="InterPro" id="IPR007645">
    <property type="entry name" value="RNA_pol_Rpb2_3"/>
</dbReference>
<dbReference type="InterPro" id="IPR007641">
    <property type="entry name" value="RNA_pol_Rpb2_7"/>
</dbReference>
<dbReference type="InterPro" id="IPR014724">
    <property type="entry name" value="RNA_pol_RPB2_OB-fold"/>
</dbReference>
<dbReference type="NCBIfam" id="NF001616">
    <property type="entry name" value="PRK00405.1"/>
    <property type="match status" value="1"/>
</dbReference>
<dbReference type="NCBIfam" id="TIGR02013">
    <property type="entry name" value="rpoB"/>
    <property type="match status" value="1"/>
</dbReference>
<dbReference type="PANTHER" id="PTHR20856">
    <property type="entry name" value="DNA-DIRECTED RNA POLYMERASE I SUBUNIT 2"/>
    <property type="match status" value="1"/>
</dbReference>
<dbReference type="Pfam" id="PF04563">
    <property type="entry name" value="RNA_pol_Rpb2_1"/>
    <property type="match status" value="1"/>
</dbReference>
<dbReference type="Pfam" id="PF04561">
    <property type="entry name" value="RNA_pol_Rpb2_2"/>
    <property type="match status" value="1"/>
</dbReference>
<dbReference type="Pfam" id="PF04565">
    <property type="entry name" value="RNA_pol_Rpb2_3"/>
    <property type="match status" value="1"/>
</dbReference>
<dbReference type="Pfam" id="PF10385">
    <property type="entry name" value="RNA_pol_Rpb2_45"/>
    <property type="match status" value="1"/>
</dbReference>
<dbReference type="Pfam" id="PF00562">
    <property type="entry name" value="RNA_pol_Rpb2_6"/>
    <property type="match status" value="1"/>
</dbReference>
<dbReference type="Pfam" id="PF04560">
    <property type="entry name" value="RNA_pol_Rpb2_7"/>
    <property type="match status" value="1"/>
</dbReference>
<dbReference type="SUPFAM" id="SSF64484">
    <property type="entry name" value="beta and beta-prime subunits of DNA dependent RNA-polymerase"/>
    <property type="match status" value="1"/>
</dbReference>
<dbReference type="PROSITE" id="PS01166">
    <property type="entry name" value="RNA_POL_BETA"/>
    <property type="match status" value="1"/>
</dbReference>
<comment type="function">
    <text evidence="1">DNA-dependent RNA polymerase catalyzes the transcription of DNA into RNA using the four ribonucleoside triphosphates as substrates.</text>
</comment>
<comment type="catalytic activity">
    <reaction evidence="1">
        <text>RNA(n) + a ribonucleoside 5'-triphosphate = RNA(n+1) + diphosphate</text>
        <dbReference type="Rhea" id="RHEA:21248"/>
        <dbReference type="Rhea" id="RHEA-COMP:14527"/>
        <dbReference type="Rhea" id="RHEA-COMP:17342"/>
        <dbReference type="ChEBI" id="CHEBI:33019"/>
        <dbReference type="ChEBI" id="CHEBI:61557"/>
        <dbReference type="ChEBI" id="CHEBI:140395"/>
        <dbReference type="EC" id="2.7.7.6"/>
    </reaction>
</comment>
<comment type="subunit">
    <text evidence="1">In plastids the minimal PEP RNA polymerase catalytic core is composed of four subunits: alpha, beta, beta', and beta''. When a (nuclear-encoded) sigma factor is associated with the core the holoenzyme is formed, which can initiate transcription.</text>
</comment>
<comment type="subcellular location">
    <subcellularLocation>
        <location>Plastid</location>
        <location>Chloroplast</location>
    </subcellularLocation>
</comment>
<comment type="similarity">
    <text evidence="1">Belongs to the RNA polymerase beta chain family.</text>
</comment>
<reference key="1">
    <citation type="journal article" date="2003" name="DNA Res.">
        <title>Complete sequence and analysis of the plastid genome of the unicellular red alga Cyanidioschyzon merolae.</title>
        <authorList>
            <person name="Ohta N."/>
            <person name="Matsuzaki M."/>
            <person name="Misumi O."/>
            <person name="Miyagishima S.-Y."/>
            <person name="Nozaki H."/>
            <person name="Tanaka K."/>
            <person name="Shin-i T."/>
            <person name="Kohara Y."/>
            <person name="Kuroiwa T."/>
        </authorList>
    </citation>
    <scope>NUCLEOTIDE SEQUENCE [LARGE SCALE GENOMIC DNA]</scope>
    <source>
        <strain>NIES-3377 / 10D</strain>
    </source>
</reference>
<protein>
    <recommendedName>
        <fullName evidence="1">DNA-directed RNA polymerase subunit beta</fullName>
        <ecNumber evidence="1">2.7.7.6</ecNumber>
    </recommendedName>
    <alternativeName>
        <fullName evidence="1">PEP</fullName>
    </alternativeName>
    <alternativeName>
        <fullName evidence="1">Plastid-encoded RNA polymerase subunit beta</fullName>
        <shortName evidence="1">RNA polymerase subunit beta</shortName>
    </alternativeName>
</protein>
<feature type="chain" id="PRO_0000048020" description="DNA-directed RNA polymerase subunit beta">
    <location>
        <begin position="1"/>
        <end position="1036"/>
    </location>
</feature>
<proteinExistence type="inferred from homology"/>
<accession>Q85FR7</accession>
<name>RPOB_CYAM1</name>
<evidence type="ECO:0000255" key="1">
    <source>
        <dbReference type="HAMAP-Rule" id="MF_01321"/>
    </source>
</evidence>
<gene>
    <name evidence="1" type="primary">rpoB</name>
</gene>